<keyword id="KW-0066">ATP synthesis</keyword>
<keyword id="KW-0138">CF(0)</keyword>
<keyword id="KW-0375">Hydrogen ion transport</keyword>
<keyword id="KW-0406">Ion transport</keyword>
<keyword id="KW-0472">Membrane</keyword>
<keyword id="KW-0496">Mitochondrion</keyword>
<keyword id="KW-0999">Mitochondrion inner membrane</keyword>
<keyword id="KW-0812">Transmembrane</keyword>
<keyword id="KW-1133">Transmembrane helix</keyword>
<keyword id="KW-0813">Transport</keyword>
<comment type="function">
    <text evidence="1">Subunit a, of the mitochondrial membrane ATP synthase complex (F(1)F(0) ATP synthase or Complex V) that produces ATP from ADP in the presence of a proton gradient across the membrane which is generated by electron transport complexes of the respiratory chain. ATP synthase complex consist of a soluble F(1) head domain - the catalytic core - and a membrane F(1) domain - the membrane proton channel. These two domains are linked by a central stalk rotating inside the F(1) region and a stationary peripheral stalk. During catalysis, ATP synthesis in the catalytic domain of F(1) is coupled via a rotary mechanism of the central stalk subunits to proton translocation. With the subunit c (ATP5MC1), forms the proton-conducting channel in the F(0) domain, that contains two crucial half-channels (inlet and outlet) that facilitate proton movement from the mitochondrial intermembrane space (IMS) into the matrix. Protons are taken up via the inlet half-channel and released through the outlet half-channel, following a Grotthuss mechanism.</text>
</comment>
<comment type="catalytic activity">
    <reaction evidence="1">
        <text>H(+)(in) = H(+)(out)</text>
        <dbReference type="Rhea" id="RHEA:34979"/>
        <dbReference type="ChEBI" id="CHEBI:15378"/>
    </reaction>
</comment>
<comment type="subunit">
    <text evidence="1">Component of the ATP synthase complex composed at least of ATP5F1A/subunit alpha, ATP5F1B/subunit beta, ATP5MC1/subunit c (homooctomer), MT-ATP6/subunit a, MT-ATP8/subunit 8, ATP5ME/subunit e, ATP5MF/subunit f, ATP5MG/subunit g, ATP5MK/subunit k, ATP5MJ/subunit j, ATP5F1C/subunit gamma, ATP5F1D/subunit delta, ATP5F1E/subunit epsilon, ATP5PF/subunit F6, ATP5PB/subunit b, ATP5PD/subunit d, ATP5PO/subunit OSCP. ATP synthase complex consists of a soluble F(1) head domain (subunits alpha(3) and beta(3)) - the catalytic core - and a membrane F(0) domain - the membrane proton channel (subunits c, a, 8, e, f, g, k and j). These two domains are linked by a central stalk (subunits gamma, delta, and epsilon) rotating inside the F1 region and a stationary peripheral stalk (subunits F6, b, d, and OSCP). Interacts with DNAJC30; interaction is direct.</text>
</comment>
<comment type="subcellular location">
    <subcellularLocation>
        <location>Mitochondrion inner membrane</location>
        <topology>Multi-pass membrane protein</topology>
    </subcellularLocation>
</comment>
<comment type="similarity">
    <text evidence="3">Belongs to the ATPase A chain family.</text>
</comment>
<proteinExistence type="inferred from homology"/>
<name>ATP6_ANAPL</name>
<evidence type="ECO:0000250" key="1">
    <source>
        <dbReference type="UniProtKB" id="P00846"/>
    </source>
</evidence>
<evidence type="ECO:0000255" key="2"/>
<evidence type="ECO:0000305" key="3"/>
<geneLocation type="mitochondrion"/>
<dbReference type="EMBL" id="L22476">
    <property type="protein sequence ID" value="AAA72036.1"/>
    <property type="molecule type" value="Genomic_DNA"/>
</dbReference>
<dbReference type="SMR" id="P50654"/>
<dbReference type="Proteomes" id="UP000694400">
    <property type="component" value="Unplaced"/>
</dbReference>
<dbReference type="GO" id="GO:0005743">
    <property type="term" value="C:mitochondrial inner membrane"/>
    <property type="evidence" value="ECO:0007669"/>
    <property type="project" value="UniProtKB-SubCell"/>
</dbReference>
<dbReference type="GO" id="GO:0045259">
    <property type="term" value="C:proton-transporting ATP synthase complex"/>
    <property type="evidence" value="ECO:0000250"/>
    <property type="project" value="UniProtKB"/>
</dbReference>
<dbReference type="GO" id="GO:0015252">
    <property type="term" value="F:proton channel activity"/>
    <property type="evidence" value="ECO:0000250"/>
    <property type="project" value="UniProtKB"/>
</dbReference>
<dbReference type="GO" id="GO:0046933">
    <property type="term" value="F:proton-transporting ATP synthase activity, rotational mechanism"/>
    <property type="evidence" value="ECO:0007669"/>
    <property type="project" value="TreeGrafter"/>
</dbReference>
<dbReference type="GO" id="GO:0015986">
    <property type="term" value="P:proton motive force-driven ATP synthesis"/>
    <property type="evidence" value="ECO:0000250"/>
    <property type="project" value="UniProtKB"/>
</dbReference>
<dbReference type="GO" id="GO:1902600">
    <property type="term" value="P:proton transmembrane transport"/>
    <property type="evidence" value="ECO:0000250"/>
    <property type="project" value="UniProtKB"/>
</dbReference>
<dbReference type="CDD" id="cd00310">
    <property type="entry name" value="ATP-synt_Fo_a_6"/>
    <property type="match status" value="1"/>
</dbReference>
<dbReference type="FunFam" id="1.20.120.220:FF:000004">
    <property type="entry name" value="ATP synthase subunit a"/>
    <property type="match status" value="1"/>
</dbReference>
<dbReference type="Gene3D" id="1.20.120.220">
    <property type="entry name" value="ATP synthase, F0 complex, subunit A"/>
    <property type="match status" value="1"/>
</dbReference>
<dbReference type="InterPro" id="IPR000568">
    <property type="entry name" value="ATP_synth_F0_asu"/>
</dbReference>
<dbReference type="InterPro" id="IPR023011">
    <property type="entry name" value="ATP_synth_F0_asu_AS"/>
</dbReference>
<dbReference type="InterPro" id="IPR045083">
    <property type="entry name" value="ATP_synth_F0_asu_bact/mt"/>
</dbReference>
<dbReference type="InterPro" id="IPR035908">
    <property type="entry name" value="F0_ATP_A_sf"/>
</dbReference>
<dbReference type="NCBIfam" id="TIGR01131">
    <property type="entry name" value="ATP_synt_6_or_A"/>
    <property type="match status" value="1"/>
</dbReference>
<dbReference type="PANTHER" id="PTHR11410">
    <property type="entry name" value="ATP SYNTHASE SUBUNIT A"/>
    <property type="match status" value="1"/>
</dbReference>
<dbReference type="PANTHER" id="PTHR11410:SF0">
    <property type="entry name" value="ATP SYNTHASE SUBUNIT A"/>
    <property type="match status" value="1"/>
</dbReference>
<dbReference type="Pfam" id="PF00119">
    <property type="entry name" value="ATP-synt_A"/>
    <property type="match status" value="1"/>
</dbReference>
<dbReference type="PRINTS" id="PR00123">
    <property type="entry name" value="ATPASEA"/>
</dbReference>
<dbReference type="SUPFAM" id="SSF81336">
    <property type="entry name" value="F1F0 ATP synthase subunit A"/>
    <property type="match status" value="1"/>
</dbReference>
<dbReference type="PROSITE" id="PS00449">
    <property type="entry name" value="ATPASE_A"/>
    <property type="match status" value="1"/>
</dbReference>
<protein>
    <recommendedName>
        <fullName evidence="1">ATP synthase F(0) complex subunit a</fullName>
    </recommendedName>
    <alternativeName>
        <fullName>F-ATPase protein 6</fullName>
    </alternativeName>
    <alternativeName>
        <fullName evidence="1">Proton-conducting channel, ATP synthase F(0) complex subunit a</fullName>
    </alternativeName>
</protein>
<gene>
    <name evidence="1" type="primary">MT-ATP6</name>
    <name type="synonym">ATP6</name>
    <name type="synonym">ATPASE6</name>
    <name type="synonym">MTATP6</name>
</gene>
<organism>
    <name type="scientific">Anas platyrhynchos</name>
    <name type="common">Mallard</name>
    <name type="synonym">Anas boschas</name>
    <dbReference type="NCBI Taxonomy" id="8839"/>
    <lineage>
        <taxon>Eukaryota</taxon>
        <taxon>Metazoa</taxon>
        <taxon>Chordata</taxon>
        <taxon>Craniata</taxon>
        <taxon>Vertebrata</taxon>
        <taxon>Euteleostomi</taxon>
        <taxon>Archelosauria</taxon>
        <taxon>Archosauria</taxon>
        <taxon>Dinosauria</taxon>
        <taxon>Saurischia</taxon>
        <taxon>Theropoda</taxon>
        <taxon>Coelurosauria</taxon>
        <taxon>Aves</taxon>
        <taxon>Neognathae</taxon>
        <taxon>Galloanserae</taxon>
        <taxon>Anseriformes</taxon>
        <taxon>Anatidae</taxon>
        <taxon>Anatinae</taxon>
        <taxon>Anas</taxon>
    </lineage>
</organism>
<feature type="chain" id="PRO_0000082084" description="ATP synthase F(0) complex subunit a">
    <location>
        <begin position="1"/>
        <end position="227"/>
    </location>
</feature>
<feature type="transmembrane region" description="Helical" evidence="2">
    <location>
        <begin position="14"/>
        <end position="34"/>
    </location>
</feature>
<feature type="transmembrane region" description="Helical" evidence="2">
    <location>
        <begin position="69"/>
        <end position="89"/>
    </location>
</feature>
<feature type="transmembrane region" description="Helical" evidence="2">
    <location>
        <begin position="98"/>
        <end position="118"/>
    </location>
</feature>
<feature type="transmembrane region" description="Helical" evidence="2">
    <location>
        <begin position="139"/>
        <end position="159"/>
    </location>
</feature>
<feature type="transmembrane region" description="Helical" evidence="2">
    <location>
        <begin position="167"/>
        <end position="187"/>
    </location>
</feature>
<feature type="transmembrane region" description="Helical" evidence="2">
    <location>
        <begin position="190"/>
        <end position="210"/>
    </location>
</feature>
<accession>P50654</accession>
<reference key="1">
    <citation type="journal article" date="1993" name="J. Mol. Evol.">
        <title>Molecular characterization and evolution of a duck mitochondrial genome.</title>
        <authorList>
            <person name="Ramirez V."/>
            <person name="Savoie P."/>
            <person name="Morais R."/>
        </authorList>
    </citation>
    <scope>NUCLEOTIDE SEQUENCE [GENOMIC DNA]</scope>
    <source>
        <strain>Pekin breed</strain>
        <tissue>Liver</tissue>
    </source>
</reference>
<sequence length="227" mass="24997">MNLSFFDQFSSPHLLGHPLILLSLLLPALLFPSPGNRWINNRLSTIQLWLLHLITKQLMIPLNKNGHKWALMLTSLMTMLLTINLLGLLPYTFTPTTQLSMNMALAFPLWLATLLTGLRNKPSASLAHLLPEGTPTPLIPALILIETTSLLIRPLALGVRLTANLTAGHLLIQLISTASIALKPILPTVSILTMAILLLLTILEVAVAMIQAYVFVLLLSLYLQENI</sequence>